<proteinExistence type="inferred from homology"/>
<name>HEM2_MYCLE</name>
<dbReference type="EC" id="4.2.1.24"/>
<dbReference type="EMBL" id="U00018">
    <property type="protein sequence ID" value="AAA17246.1"/>
    <property type="molecule type" value="Genomic_DNA"/>
</dbReference>
<dbReference type="EMBL" id="AL583925">
    <property type="protein sequence ID" value="CAC31935.1"/>
    <property type="molecule type" value="Genomic_DNA"/>
</dbReference>
<dbReference type="PIR" id="S72910">
    <property type="entry name" value="S72910"/>
</dbReference>
<dbReference type="RefSeq" id="NP_302564.1">
    <property type="nucleotide sequence ID" value="NC_002677.1"/>
</dbReference>
<dbReference type="RefSeq" id="WP_010908884.1">
    <property type="nucleotide sequence ID" value="NC_002677.1"/>
</dbReference>
<dbReference type="SMR" id="P46723"/>
<dbReference type="STRING" id="272631.gene:17576281"/>
<dbReference type="KEGG" id="mle:ML2419"/>
<dbReference type="PATRIC" id="fig|272631.5.peg.4656"/>
<dbReference type="Leproma" id="ML2419"/>
<dbReference type="eggNOG" id="COG0113">
    <property type="taxonomic scope" value="Bacteria"/>
</dbReference>
<dbReference type="HOGENOM" id="CLU_035731_0_0_11"/>
<dbReference type="OrthoDB" id="9805001at2"/>
<dbReference type="UniPathway" id="UPA00251">
    <property type="reaction ID" value="UER00318"/>
</dbReference>
<dbReference type="Proteomes" id="UP000000806">
    <property type="component" value="Chromosome"/>
</dbReference>
<dbReference type="GO" id="GO:0005829">
    <property type="term" value="C:cytosol"/>
    <property type="evidence" value="ECO:0007669"/>
    <property type="project" value="TreeGrafter"/>
</dbReference>
<dbReference type="GO" id="GO:0004655">
    <property type="term" value="F:porphobilinogen synthase activity"/>
    <property type="evidence" value="ECO:0007669"/>
    <property type="project" value="UniProtKB-EC"/>
</dbReference>
<dbReference type="GO" id="GO:0008270">
    <property type="term" value="F:zinc ion binding"/>
    <property type="evidence" value="ECO:0007669"/>
    <property type="project" value="TreeGrafter"/>
</dbReference>
<dbReference type="GO" id="GO:0006782">
    <property type="term" value="P:protoporphyrinogen IX biosynthetic process"/>
    <property type="evidence" value="ECO:0007669"/>
    <property type="project" value="UniProtKB-UniPathway"/>
</dbReference>
<dbReference type="CDD" id="cd00384">
    <property type="entry name" value="ALAD_PBGS"/>
    <property type="match status" value="1"/>
</dbReference>
<dbReference type="FunFam" id="3.20.20.70:FF:000019">
    <property type="entry name" value="Delta-aminolevulinic acid dehydratase"/>
    <property type="match status" value="1"/>
</dbReference>
<dbReference type="Gene3D" id="3.20.20.70">
    <property type="entry name" value="Aldolase class I"/>
    <property type="match status" value="1"/>
</dbReference>
<dbReference type="InterPro" id="IPR001731">
    <property type="entry name" value="ALAD"/>
</dbReference>
<dbReference type="InterPro" id="IPR030656">
    <property type="entry name" value="ALAD_AS"/>
</dbReference>
<dbReference type="InterPro" id="IPR013785">
    <property type="entry name" value="Aldolase_TIM"/>
</dbReference>
<dbReference type="NCBIfam" id="NF006762">
    <property type="entry name" value="PRK09283.1"/>
    <property type="match status" value="1"/>
</dbReference>
<dbReference type="PANTHER" id="PTHR11458">
    <property type="entry name" value="DELTA-AMINOLEVULINIC ACID DEHYDRATASE"/>
    <property type="match status" value="1"/>
</dbReference>
<dbReference type="PANTHER" id="PTHR11458:SF0">
    <property type="entry name" value="DELTA-AMINOLEVULINIC ACID DEHYDRATASE"/>
    <property type="match status" value="1"/>
</dbReference>
<dbReference type="Pfam" id="PF00490">
    <property type="entry name" value="ALAD"/>
    <property type="match status" value="1"/>
</dbReference>
<dbReference type="PIRSF" id="PIRSF001415">
    <property type="entry name" value="Porphbilin_synth"/>
    <property type="match status" value="1"/>
</dbReference>
<dbReference type="PRINTS" id="PR00144">
    <property type="entry name" value="DALDHYDRTASE"/>
</dbReference>
<dbReference type="SMART" id="SM01004">
    <property type="entry name" value="ALAD"/>
    <property type="match status" value="1"/>
</dbReference>
<dbReference type="SUPFAM" id="SSF51569">
    <property type="entry name" value="Aldolase"/>
    <property type="match status" value="1"/>
</dbReference>
<dbReference type="PROSITE" id="PS00169">
    <property type="entry name" value="D_ALA_DEHYDRATASE"/>
    <property type="match status" value="1"/>
</dbReference>
<gene>
    <name type="primary">hemB</name>
    <name type="ordered locus">ML2419</name>
    <name type="ORF">B2168_C3_264</name>
</gene>
<reference key="1">
    <citation type="submission" date="1994-03" db="EMBL/GenBank/DDBJ databases">
        <authorList>
            <person name="Smith D.R."/>
            <person name="Robison K."/>
        </authorList>
    </citation>
    <scope>NUCLEOTIDE SEQUENCE [GENOMIC DNA]</scope>
</reference>
<reference key="2">
    <citation type="journal article" date="2001" name="Nature">
        <title>Massive gene decay in the leprosy bacillus.</title>
        <authorList>
            <person name="Cole S.T."/>
            <person name="Eiglmeier K."/>
            <person name="Parkhill J."/>
            <person name="James K.D."/>
            <person name="Thomson N.R."/>
            <person name="Wheeler P.R."/>
            <person name="Honore N."/>
            <person name="Garnier T."/>
            <person name="Churcher C.M."/>
            <person name="Harris D.E."/>
            <person name="Mungall K.L."/>
            <person name="Basham D."/>
            <person name="Brown D."/>
            <person name="Chillingworth T."/>
            <person name="Connor R."/>
            <person name="Davies R.M."/>
            <person name="Devlin K."/>
            <person name="Duthoy S."/>
            <person name="Feltwell T."/>
            <person name="Fraser A."/>
            <person name="Hamlin N."/>
            <person name="Holroyd S."/>
            <person name="Hornsby T."/>
            <person name="Jagels K."/>
            <person name="Lacroix C."/>
            <person name="Maclean J."/>
            <person name="Moule S."/>
            <person name="Murphy L.D."/>
            <person name="Oliver K."/>
            <person name="Quail M.A."/>
            <person name="Rajandream M.A."/>
            <person name="Rutherford K.M."/>
            <person name="Rutter S."/>
            <person name="Seeger K."/>
            <person name="Simon S."/>
            <person name="Simmonds M."/>
            <person name="Skelton J."/>
            <person name="Squares R."/>
            <person name="Squares S."/>
            <person name="Stevens K."/>
            <person name="Taylor K."/>
            <person name="Whitehead S."/>
            <person name="Woodward J.R."/>
            <person name="Barrell B.G."/>
        </authorList>
    </citation>
    <scope>NUCLEOTIDE SEQUENCE [LARGE SCALE GENOMIC DNA]</scope>
    <source>
        <strain>TN</strain>
    </source>
</reference>
<evidence type="ECO:0000250" key="1"/>
<evidence type="ECO:0000305" key="2"/>
<protein>
    <recommendedName>
        <fullName>Delta-aminolevulinic acid dehydratase</fullName>
        <shortName>ALAD</shortName>
        <shortName>ALADH</shortName>
        <ecNumber>4.2.1.24</ecNumber>
    </recommendedName>
    <alternativeName>
        <fullName>Porphobilinogen synthase</fullName>
    </alternativeName>
</protein>
<accession>P46723</accession>
<comment type="function">
    <text evidence="1">Catalyzes an early step in the biosynthesis of tetrapyrroles. Binds two molecules of 5-aminolevulinate per subunit, each at a distinct site, and catalyzes their condensation to form porphobilinogen (By similarity).</text>
</comment>
<comment type="catalytic activity">
    <reaction>
        <text>2 5-aminolevulinate = porphobilinogen + 2 H2O + H(+)</text>
        <dbReference type="Rhea" id="RHEA:24064"/>
        <dbReference type="ChEBI" id="CHEBI:15377"/>
        <dbReference type="ChEBI" id="CHEBI:15378"/>
        <dbReference type="ChEBI" id="CHEBI:58126"/>
        <dbReference type="ChEBI" id="CHEBI:356416"/>
        <dbReference type="EC" id="4.2.1.24"/>
    </reaction>
</comment>
<comment type="pathway">
    <text>Porphyrin-containing compound metabolism; protoporphyrin-IX biosynthesis; coproporphyrinogen-III from 5-aminolevulinate: step 1/4.</text>
</comment>
<comment type="subunit">
    <text evidence="1">Homooctamer.</text>
</comment>
<comment type="similarity">
    <text evidence="2">Belongs to the ALAD family.</text>
</comment>
<feature type="chain" id="PRO_0000140504" description="Delta-aminolevulinic acid dehydratase">
    <location>
        <begin position="1"/>
        <end position="329"/>
    </location>
</feature>
<feature type="active site" description="Schiff-base intermediate with substrate" evidence="1">
    <location>
        <position position="202"/>
    </location>
</feature>
<feature type="active site" description="Schiff-base intermediate with substrate" evidence="1">
    <location>
        <position position="254"/>
    </location>
</feature>
<feature type="binding site" evidence="1">
    <location>
        <position position="212"/>
    </location>
    <ligand>
        <name>5-aminolevulinate</name>
        <dbReference type="ChEBI" id="CHEBI:356416"/>
        <label>1</label>
    </ligand>
</feature>
<feature type="binding site" evidence="1">
    <location>
        <position position="223"/>
    </location>
    <ligand>
        <name>5-aminolevulinate</name>
        <dbReference type="ChEBI" id="CHEBI:356416"/>
        <label>1</label>
    </ligand>
</feature>
<feature type="binding site" evidence="1">
    <location>
        <position position="239"/>
    </location>
    <ligand>
        <name>Mg(2+)</name>
        <dbReference type="ChEBI" id="CHEBI:18420"/>
    </ligand>
</feature>
<feature type="binding site" evidence="1">
    <location>
        <position position="280"/>
    </location>
    <ligand>
        <name>5-aminolevulinate</name>
        <dbReference type="ChEBI" id="CHEBI:356416"/>
        <label>2</label>
    </ligand>
</feature>
<feature type="binding site" evidence="1">
    <location>
        <position position="319"/>
    </location>
    <ligand>
        <name>5-aminolevulinate</name>
        <dbReference type="ChEBI" id="CHEBI:356416"/>
        <label>2</label>
    </ligand>
</feature>
<keyword id="KW-0350">Heme biosynthesis</keyword>
<keyword id="KW-0456">Lyase</keyword>
<keyword id="KW-0460">Magnesium</keyword>
<keyword id="KW-0479">Metal-binding</keyword>
<keyword id="KW-0627">Porphyrin biosynthesis</keyword>
<keyword id="KW-1185">Reference proteome</keyword>
<sequence length="329" mass="34775">MSVSGYPRHRPRRLRSTPAMRRLVAQTSLEPRNLVLPMFVADGIDELRPIASMPGVVQHTRDSLRRAAVAAVDAGVGGLNLFGVPRDQDKDATGSAGVDPDGILNVALRDLAEDLGDATVLMADTCLDEFTDHGHCGVLDGQGRVDNDATVARYVELAVAQAESGANVVGPSGMMDGQIGALRDGLDSAGYADVAILAYAAKFSSAFYGPFREAVSCSLSGDRRTYQQEPGNAREALREIKLDLDEGADIIMIKPASGYLDVVATAAGVSPVPVAAYQVSGEYAMICAAAANNWIDERAAVLESLTSIRRAGADIVFTYWAADVACWLS</sequence>
<organism>
    <name type="scientific">Mycobacterium leprae (strain TN)</name>
    <dbReference type="NCBI Taxonomy" id="272631"/>
    <lineage>
        <taxon>Bacteria</taxon>
        <taxon>Bacillati</taxon>
        <taxon>Actinomycetota</taxon>
        <taxon>Actinomycetes</taxon>
        <taxon>Mycobacteriales</taxon>
        <taxon>Mycobacteriaceae</taxon>
        <taxon>Mycobacterium</taxon>
    </lineage>
</organism>